<dbReference type="EMBL" id="AF170446">
    <property type="protein sequence ID" value="AAG21086.1"/>
    <property type="molecule type" value="Genomic_DNA"/>
</dbReference>
<dbReference type="EMBL" id="AF169632">
    <property type="protein sequence ID" value="AAG21086.1"/>
    <property type="status" value="JOINED"/>
    <property type="molecule type" value="Genomic_DNA"/>
</dbReference>
<dbReference type="EMBL" id="BC025850">
    <property type="protein sequence ID" value="AAH25850.1"/>
    <property type="molecule type" value="mRNA"/>
</dbReference>
<dbReference type="CCDS" id="CCDS22711.1"/>
<dbReference type="RefSeq" id="NP_075884.1">
    <property type="nucleotide sequence ID" value="NM_023395.2"/>
</dbReference>
<dbReference type="SMR" id="Q9ESH5"/>
<dbReference type="FunCoup" id="Q9ESH5">
    <property type="interactions" value="499"/>
</dbReference>
<dbReference type="STRING" id="10090.ENSMUSP00000024107"/>
<dbReference type="MEROPS" id="I17.004"/>
<dbReference type="PhosphoSitePlus" id="Q9ESH5"/>
<dbReference type="PaxDb" id="10090-ENSMUSP00000024107"/>
<dbReference type="ProteomicsDB" id="299672"/>
<dbReference type="Antibodypedia" id="30582">
    <property type="antibodies" value="175 antibodies from 28 providers"/>
</dbReference>
<dbReference type="DNASU" id="67866"/>
<dbReference type="Ensembl" id="ENSMUST00000024107.7">
    <property type="protein sequence ID" value="ENSMUSP00000024107.6"/>
    <property type="gene ID" value="ENSMUSG00000023336.7"/>
</dbReference>
<dbReference type="GeneID" id="67866"/>
<dbReference type="KEGG" id="mmu:67866"/>
<dbReference type="UCSC" id="uc009nqe.1">
    <property type="organism name" value="mouse"/>
</dbReference>
<dbReference type="AGR" id="MGI:1915116"/>
<dbReference type="CTD" id="58189"/>
<dbReference type="MGI" id="MGI:1915116">
    <property type="gene designation" value="Wfdc1"/>
</dbReference>
<dbReference type="VEuPathDB" id="HostDB:ENSMUSG00000023336"/>
<dbReference type="eggNOG" id="ENOG502QWDC">
    <property type="taxonomic scope" value="Eukaryota"/>
</dbReference>
<dbReference type="GeneTree" id="ENSGT00390000014299"/>
<dbReference type="HOGENOM" id="CLU_108761_0_0_1"/>
<dbReference type="InParanoid" id="Q9ESH5"/>
<dbReference type="OMA" id="RFYKEYP"/>
<dbReference type="OrthoDB" id="5989673at2759"/>
<dbReference type="PhylomeDB" id="Q9ESH5"/>
<dbReference type="TreeFam" id="TF328768"/>
<dbReference type="BioGRID-ORCS" id="67866">
    <property type="hits" value="0 hits in 76 CRISPR screens"/>
</dbReference>
<dbReference type="PRO" id="PR:Q9ESH5"/>
<dbReference type="Proteomes" id="UP000000589">
    <property type="component" value="Chromosome 8"/>
</dbReference>
<dbReference type="RNAct" id="Q9ESH5">
    <property type="molecule type" value="protein"/>
</dbReference>
<dbReference type="Bgee" id="ENSMUSG00000023336">
    <property type="expression patterns" value="Expressed in temporalis muscle and 125 other cell types or tissues"/>
</dbReference>
<dbReference type="ExpressionAtlas" id="Q9ESH5">
    <property type="expression patterns" value="baseline and differential"/>
</dbReference>
<dbReference type="GO" id="GO:0005576">
    <property type="term" value="C:extracellular region"/>
    <property type="evidence" value="ECO:0007669"/>
    <property type="project" value="UniProtKB-SubCell"/>
</dbReference>
<dbReference type="GO" id="GO:0004867">
    <property type="term" value="F:serine-type endopeptidase inhibitor activity"/>
    <property type="evidence" value="ECO:0007669"/>
    <property type="project" value="UniProtKB-KW"/>
</dbReference>
<dbReference type="GO" id="GO:0050728">
    <property type="term" value="P:negative regulation of inflammatory response"/>
    <property type="evidence" value="ECO:0000315"/>
    <property type="project" value="MGI"/>
</dbReference>
<dbReference type="GO" id="GO:0061045">
    <property type="term" value="P:negative regulation of wound healing"/>
    <property type="evidence" value="ECO:0000315"/>
    <property type="project" value="MGI"/>
</dbReference>
<dbReference type="FunFam" id="4.10.75.10:FF:000003">
    <property type="entry name" value="WAP four-disulfide core domain protein 1"/>
    <property type="match status" value="1"/>
</dbReference>
<dbReference type="Gene3D" id="4.10.75.10">
    <property type="entry name" value="Elafin-like"/>
    <property type="match status" value="1"/>
</dbReference>
<dbReference type="InterPro" id="IPR036645">
    <property type="entry name" value="Elafin-like_sf"/>
</dbReference>
<dbReference type="InterPro" id="IPR008197">
    <property type="entry name" value="WAP_dom"/>
</dbReference>
<dbReference type="InterPro" id="IPR042357">
    <property type="entry name" value="WFDC1"/>
</dbReference>
<dbReference type="PANTHER" id="PTHR14308">
    <property type="entry name" value="WAP FOUR-DISULFIDE CORE DOMAIN PROTEIN 1"/>
    <property type="match status" value="1"/>
</dbReference>
<dbReference type="PANTHER" id="PTHR14308:SF0">
    <property type="entry name" value="WAP FOUR-DISULFIDE CORE DOMAIN PROTEIN 1"/>
    <property type="match status" value="1"/>
</dbReference>
<dbReference type="Pfam" id="PF00095">
    <property type="entry name" value="WAP"/>
    <property type="match status" value="1"/>
</dbReference>
<dbReference type="SMART" id="SM00217">
    <property type="entry name" value="WAP"/>
    <property type="match status" value="1"/>
</dbReference>
<dbReference type="SUPFAM" id="SSF57256">
    <property type="entry name" value="Elafin-like"/>
    <property type="match status" value="1"/>
</dbReference>
<dbReference type="PROSITE" id="PS51390">
    <property type="entry name" value="WAP"/>
    <property type="match status" value="1"/>
</dbReference>
<protein>
    <recommendedName>
        <fullName>WAP four-disulfide core domain protein 1</fullName>
    </recommendedName>
    <alternativeName>
        <fullName>Prostate stromal protein ps20</fullName>
    </alternativeName>
    <alternativeName>
        <fullName>ps20 growth inhibitor</fullName>
    </alternativeName>
</protein>
<sequence length="211" mass="23079">MGNCGRKVLRALSFLLLLGSSSAQGTWEAMLPARLAEKSRAEEVAATGSRQPHADRCPPPPRTLPPGACQATRCQADSECPRHRRCCYNGCAYACLEAVPPPPVLDWLVQPKPRWLGGNGWLLDGPEEVLQAETCSTTEDGAEPLLCPSGYECHILQPGDEAQGIPNHGQCVKQRRQAEGRVLRQRLHKEYPEGDSKNVAEPGKGQQRHFP</sequence>
<proteinExistence type="evidence at transcript level"/>
<evidence type="ECO:0000250" key="1"/>
<evidence type="ECO:0000255" key="2"/>
<evidence type="ECO:0000255" key="3">
    <source>
        <dbReference type="PROSITE-ProRule" id="PRU00722"/>
    </source>
</evidence>
<evidence type="ECO:0000256" key="4">
    <source>
        <dbReference type="SAM" id="MobiDB-lite"/>
    </source>
</evidence>
<evidence type="ECO:0000305" key="5"/>
<reference key="1">
    <citation type="journal article" date="2000" name="Mamm. Genome">
        <title>The WFDC1 gene encoding ps20 localizes to 16q24, a region of LOH in multiple cancers.</title>
        <authorList>
            <person name="Larsen M."/>
            <person name="Ressler S.J."/>
            <person name="Gerdes M.J."/>
            <person name="Lu B."/>
            <person name="Byron M."/>
            <person name="Lawrence J.B."/>
            <person name="Rowley D.R."/>
        </authorList>
    </citation>
    <scope>NUCLEOTIDE SEQUENCE [GENOMIC DNA]</scope>
    <source>
        <strain>129/SvJ</strain>
    </source>
</reference>
<reference key="2">
    <citation type="journal article" date="2004" name="Genome Res.">
        <title>The status, quality, and expansion of the NIH full-length cDNA project: the Mammalian Gene Collection (MGC).</title>
        <authorList>
            <consortium name="The MGC Project Team"/>
        </authorList>
    </citation>
    <scope>NUCLEOTIDE SEQUENCE [LARGE SCALE MRNA] OF 4-211</scope>
    <source>
        <tissue>Liver</tissue>
    </source>
</reference>
<name>WFDC1_MOUSE</name>
<comment type="function">
    <text evidence="1">Has growth inhibitory activity.</text>
</comment>
<comment type="subcellular location">
    <subcellularLocation>
        <location evidence="5">Secreted</location>
    </subcellularLocation>
</comment>
<organism>
    <name type="scientific">Mus musculus</name>
    <name type="common">Mouse</name>
    <dbReference type="NCBI Taxonomy" id="10090"/>
    <lineage>
        <taxon>Eukaryota</taxon>
        <taxon>Metazoa</taxon>
        <taxon>Chordata</taxon>
        <taxon>Craniata</taxon>
        <taxon>Vertebrata</taxon>
        <taxon>Euteleostomi</taxon>
        <taxon>Mammalia</taxon>
        <taxon>Eutheria</taxon>
        <taxon>Euarchontoglires</taxon>
        <taxon>Glires</taxon>
        <taxon>Rodentia</taxon>
        <taxon>Myomorpha</taxon>
        <taxon>Muroidea</taxon>
        <taxon>Muridae</taxon>
        <taxon>Murinae</taxon>
        <taxon>Mus</taxon>
        <taxon>Mus</taxon>
    </lineage>
</organism>
<keyword id="KW-1015">Disulfide bond</keyword>
<keyword id="KW-0646">Protease inhibitor</keyword>
<keyword id="KW-1185">Reference proteome</keyword>
<keyword id="KW-0964">Secreted</keyword>
<keyword id="KW-0722">Serine protease inhibitor</keyword>
<keyword id="KW-0732">Signal</keyword>
<feature type="signal peptide" evidence="2">
    <location>
        <begin position="1"/>
        <end position="23"/>
    </location>
</feature>
<feature type="chain" id="PRO_0000041366" description="WAP four-disulfide core domain protein 1">
    <location>
        <begin position="24"/>
        <end position="211"/>
    </location>
</feature>
<feature type="domain" description="WAP" evidence="3">
    <location>
        <begin position="50"/>
        <end position="99"/>
    </location>
</feature>
<feature type="region of interest" description="Disordered" evidence="4">
    <location>
        <begin position="182"/>
        <end position="211"/>
    </location>
</feature>
<feature type="compositionally biased region" description="Basic and acidic residues" evidence="4">
    <location>
        <begin position="182"/>
        <end position="198"/>
    </location>
</feature>
<feature type="disulfide bond" evidence="3">
    <location>
        <begin position="57"/>
        <end position="87"/>
    </location>
</feature>
<feature type="disulfide bond" evidence="3">
    <location>
        <begin position="69"/>
        <end position="91"/>
    </location>
</feature>
<feature type="disulfide bond" evidence="3">
    <location>
        <begin position="74"/>
        <end position="86"/>
    </location>
</feature>
<feature type="disulfide bond" evidence="3">
    <location>
        <begin position="80"/>
        <end position="95"/>
    </location>
</feature>
<feature type="sequence conflict" description="In Ref. 2; AAH25850." evidence="5" ref="2">
    <location>
        <position position="132"/>
    </location>
</feature>
<accession>Q9ESH5</accession>
<accession>Q8R110</accession>
<gene>
    <name type="primary">Wfdc1</name>
    <name type="synonym">Ps20</name>
</gene>